<protein>
    <recommendedName>
        <fullName evidence="1">tRNA pseudouridine synthase B</fullName>
        <ecNumber evidence="1">5.4.99.25</ecNumber>
    </recommendedName>
    <alternativeName>
        <fullName evidence="1">tRNA pseudouridine(55) synthase</fullName>
        <shortName evidence="1">Psi55 synthase</shortName>
    </alternativeName>
    <alternativeName>
        <fullName evidence="1">tRNA pseudouridylate synthase</fullName>
    </alternativeName>
    <alternativeName>
        <fullName evidence="1">tRNA-uridine isomerase</fullName>
    </alternativeName>
</protein>
<reference key="1">
    <citation type="submission" date="2008-06" db="EMBL/GenBank/DDBJ databases">
        <title>Lactobacillus casei BL23 complete genome sequence.</title>
        <authorList>
            <person name="Maze A."/>
            <person name="Boel G."/>
            <person name="Bourand A."/>
            <person name="Loux V."/>
            <person name="Gibrat J.F."/>
            <person name="Zuniga M."/>
            <person name="Hartke A."/>
            <person name="Deutscher J."/>
        </authorList>
    </citation>
    <scope>NUCLEOTIDE SEQUENCE [LARGE SCALE GENOMIC DNA]</scope>
    <source>
        <strain>BL23</strain>
    </source>
</reference>
<name>TRUB_LACCB</name>
<sequence length="306" mass="33235">MKGTAMNGILPLYKPTGMTSADAVYHARKILGIKKIGHSGTLDPNVDGVLPLAIGAGTKAVPQLMASGKVYTGEITLGFATTTEDLDGEVVDKTPLTQPFTADQLDAALTAWTGNITQIPPMFSAVKVNGRRLYEYARAGETVKRPERQATVSQFTRTDEPVFSATDGTQRFRFEVHVSKGTYIRTLAVDVGKTLGVAAVMSQLTRVKSGGFTLKQAVSIEQLKAHAAAGTLADVIQPIDIAFADLPQVDLTVEQFEAISHGRFLSLDQQTPRVRLHFAGVLKAIYRREDDQYRPDLMFLANEKNV</sequence>
<keyword id="KW-0413">Isomerase</keyword>
<keyword id="KW-0819">tRNA processing</keyword>
<feature type="chain" id="PRO_1000149824" description="tRNA pseudouridine synthase B">
    <location>
        <begin position="1"/>
        <end position="306"/>
    </location>
</feature>
<feature type="active site" description="Nucleophile" evidence="1">
    <location>
        <position position="43"/>
    </location>
</feature>
<gene>
    <name evidence="1" type="primary">truB</name>
    <name type="ordered locus">LCABL_17830</name>
</gene>
<comment type="function">
    <text evidence="1">Responsible for synthesis of pseudouridine from uracil-55 in the psi GC loop of transfer RNAs.</text>
</comment>
<comment type="catalytic activity">
    <reaction evidence="1">
        <text>uridine(55) in tRNA = pseudouridine(55) in tRNA</text>
        <dbReference type="Rhea" id="RHEA:42532"/>
        <dbReference type="Rhea" id="RHEA-COMP:10101"/>
        <dbReference type="Rhea" id="RHEA-COMP:10102"/>
        <dbReference type="ChEBI" id="CHEBI:65314"/>
        <dbReference type="ChEBI" id="CHEBI:65315"/>
        <dbReference type="EC" id="5.4.99.25"/>
    </reaction>
</comment>
<comment type="similarity">
    <text evidence="1">Belongs to the pseudouridine synthase TruB family. Type 1 subfamily.</text>
</comment>
<organism>
    <name type="scientific">Lacticaseibacillus casei (strain BL23)</name>
    <name type="common">Lactobacillus casei</name>
    <dbReference type="NCBI Taxonomy" id="543734"/>
    <lineage>
        <taxon>Bacteria</taxon>
        <taxon>Bacillati</taxon>
        <taxon>Bacillota</taxon>
        <taxon>Bacilli</taxon>
        <taxon>Lactobacillales</taxon>
        <taxon>Lactobacillaceae</taxon>
        <taxon>Lacticaseibacillus</taxon>
    </lineage>
</organism>
<evidence type="ECO:0000255" key="1">
    <source>
        <dbReference type="HAMAP-Rule" id="MF_01080"/>
    </source>
</evidence>
<accession>B3WER2</accession>
<dbReference type="EC" id="5.4.99.25" evidence="1"/>
<dbReference type="EMBL" id="FM177140">
    <property type="protein sequence ID" value="CAQ66863.1"/>
    <property type="molecule type" value="Genomic_DNA"/>
</dbReference>
<dbReference type="SMR" id="B3WER2"/>
<dbReference type="KEGG" id="lcb:LCABL_17830"/>
<dbReference type="HOGENOM" id="CLU_032087_0_1_9"/>
<dbReference type="GO" id="GO:0003723">
    <property type="term" value="F:RNA binding"/>
    <property type="evidence" value="ECO:0007669"/>
    <property type="project" value="InterPro"/>
</dbReference>
<dbReference type="GO" id="GO:0160148">
    <property type="term" value="F:tRNA pseudouridine(55) synthase activity"/>
    <property type="evidence" value="ECO:0007669"/>
    <property type="project" value="UniProtKB-EC"/>
</dbReference>
<dbReference type="GO" id="GO:1990481">
    <property type="term" value="P:mRNA pseudouridine synthesis"/>
    <property type="evidence" value="ECO:0007669"/>
    <property type="project" value="TreeGrafter"/>
</dbReference>
<dbReference type="GO" id="GO:0031119">
    <property type="term" value="P:tRNA pseudouridine synthesis"/>
    <property type="evidence" value="ECO:0007669"/>
    <property type="project" value="UniProtKB-UniRule"/>
</dbReference>
<dbReference type="CDD" id="cd02573">
    <property type="entry name" value="PseudoU_synth_EcTruB"/>
    <property type="match status" value="1"/>
</dbReference>
<dbReference type="FunFam" id="3.30.2350.10:FF:000011">
    <property type="entry name" value="tRNA pseudouridine synthase B"/>
    <property type="match status" value="1"/>
</dbReference>
<dbReference type="Gene3D" id="3.30.2350.10">
    <property type="entry name" value="Pseudouridine synthase"/>
    <property type="match status" value="1"/>
</dbReference>
<dbReference type="HAMAP" id="MF_01080">
    <property type="entry name" value="TruB_bact"/>
    <property type="match status" value="1"/>
</dbReference>
<dbReference type="InterPro" id="IPR020103">
    <property type="entry name" value="PsdUridine_synth_cat_dom_sf"/>
</dbReference>
<dbReference type="InterPro" id="IPR002501">
    <property type="entry name" value="PsdUridine_synth_N"/>
</dbReference>
<dbReference type="InterPro" id="IPR014780">
    <property type="entry name" value="tRNA_psdUridine_synth_TruB"/>
</dbReference>
<dbReference type="InterPro" id="IPR032819">
    <property type="entry name" value="TruB_C"/>
</dbReference>
<dbReference type="NCBIfam" id="TIGR00431">
    <property type="entry name" value="TruB"/>
    <property type="match status" value="1"/>
</dbReference>
<dbReference type="PANTHER" id="PTHR13767:SF2">
    <property type="entry name" value="PSEUDOURIDYLATE SYNTHASE TRUB1"/>
    <property type="match status" value="1"/>
</dbReference>
<dbReference type="PANTHER" id="PTHR13767">
    <property type="entry name" value="TRNA-PSEUDOURIDINE SYNTHASE"/>
    <property type="match status" value="1"/>
</dbReference>
<dbReference type="Pfam" id="PF16198">
    <property type="entry name" value="TruB_C_2"/>
    <property type="match status" value="1"/>
</dbReference>
<dbReference type="Pfam" id="PF01509">
    <property type="entry name" value="TruB_N"/>
    <property type="match status" value="1"/>
</dbReference>
<dbReference type="SUPFAM" id="SSF55120">
    <property type="entry name" value="Pseudouridine synthase"/>
    <property type="match status" value="1"/>
</dbReference>
<proteinExistence type="inferred from homology"/>